<comment type="function">
    <text evidence="1">Bifunctional enzyme that catalyzes both the deamination of dCTP to dUTP and the hydrolysis of dUTP to dUMP without releasing the toxic dUTP intermediate.</text>
</comment>
<comment type="catalytic activity">
    <reaction evidence="1">
        <text>dCTP + 2 H2O = dUMP + NH4(+) + diphosphate</text>
        <dbReference type="Rhea" id="RHEA:19205"/>
        <dbReference type="ChEBI" id="CHEBI:15377"/>
        <dbReference type="ChEBI" id="CHEBI:28938"/>
        <dbReference type="ChEBI" id="CHEBI:33019"/>
        <dbReference type="ChEBI" id="CHEBI:61481"/>
        <dbReference type="ChEBI" id="CHEBI:246422"/>
        <dbReference type="EC" id="3.5.4.30"/>
    </reaction>
</comment>
<comment type="pathway">
    <text evidence="1">Pyrimidine metabolism; dUMP biosynthesis; dUMP from dCTP: step 1/1.</text>
</comment>
<comment type="subunit">
    <text evidence="1">Homotrimer.</text>
</comment>
<comment type="similarity">
    <text evidence="1">Belongs to the dCTP deaminase family.</text>
</comment>
<protein>
    <recommendedName>
        <fullName evidence="1">dCTP deaminase, dUMP-forming</fullName>
        <ecNumber evidence="1">3.5.4.30</ecNumber>
    </recommendedName>
    <alternativeName>
        <fullName evidence="1">Bifunctional dCTP deaminase:dUTPase</fullName>
    </alternativeName>
    <alternativeName>
        <fullName evidence="1">DCD-DUT</fullName>
    </alternativeName>
</protein>
<organism>
    <name type="scientific">Methanospirillum hungatei JF-1 (strain ATCC 27890 / DSM 864 / NBRC 100397 / JF-1)</name>
    <dbReference type="NCBI Taxonomy" id="323259"/>
    <lineage>
        <taxon>Archaea</taxon>
        <taxon>Methanobacteriati</taxon>
        <taxon>Methanobacteriota</taxon>
        <taxon>Stenosarchaea group</taxon>
        <taxon>Methanomicrobia</taxon>
        <taxon>Methanomicrobiales</taxon>
        <taxon>Methanospirillaceae</taxon>
        <taxon>Methanospirillum</taxon>
    </lineage>
</organism>
<dbReference type="EC" id="3.5.4.30" evidence="1"/>
<dbReference type="EMBL" id="CP000254">
    <property type="protein sequence ID" value="ABD40758.1"/>
    <property type="molecule type" value="Genomic_DNA"/>
</dbReference>
<dbReference type="RefSeq" id="WP_011448037.1">
    <property type="nucleotide sequence ID" value="NC_007796.1"/>
</dbReference>
<dbReference type="SMR" id="Q2FQM7"/>
<dbReference type="FunCoup" id="Q2FQM7">
    <property type="interactions" value="23"/>
</dbReference>
<dbReference type="STRING" id="323259.Mhun_1008"/>
<dbReference type="EnsemblBacteria" id="ABD40758">
    <property type="protein sequence ID" value="ABD40758"/>
    <property type="gene ID" value="Mhun_1008"/>
</dbReference>
<dbReference type="GeneID" id="3924568"/>
<dbReference type="KEGG" id="mhu:Mhun_1008"/>
<dbReference type="eggNOG" id="arCOG04048">
    <property type="taxonomic scope" value="Archaea"/>
</dbReference>
<dbReference type="HOGENOM" id="CLU_087476_2_1_2"/>
<dbReference type="InParanoid" id="Q2FQM7"/>
<dbReference type="OrthoDB" id="33242at2157"/>
<dbReference type="UniPathway" id="UPA00610">
    <property type="reaction ID" value="UER00667"/>
</dbReference>
<dbReference type="Proteomes" id="UP000001941">
    <property type="component" value="Chromosome"/>
</dbReference>
<dbReference type="GO" id="GO:0033973">
    <property type="term" value="F:dCTP deaminase (dUMP-forming) activity"/>
    <property type="evidence" value="ECO:0007669"/>
    <property type="project" value="UniProtKB-UniRule"/>
</dbReference>
<dbReference type="GO" id="GO:0008829">
    <property type="term" value="F:dCTP deaminase activity"/>
    <property type="evidence" value="ECO:0007669"/>
    <property type="project" value="InterPro"/>
</dbReference>
<dbReference type="GO" id="GO:0000166">
    <property type="term" value="F:nucleotide binding"/>
    <property type="evidence" value="ECO:0007669"/>
    <property type="project" value="UniProtKB-KW"/>
</dbReference>
<dbReference type="GO" id="GO:0006226">
    <property type="term" value="P:dUMP biosynthetic process"/>
    <property type="evidence" value="ECO:0007669"/>
    <property type="project" value="UniProtKB-UniRule"/>
</dbReference>
<dbReference type="GO" id="GO:0006229">
    <property type="term" value="P:dUTP biosynthetic process"/>
    <property type="evidence" value="ECO:0007669"/>
    <property type="project" value="InterPro"/>
</dbReference>
<dbReference type="CDD" id="cd07557">
    <property type="entry name" value="trimeric_dUTPase"/>
    <property type="match status" value="1"/>
</dbReference>
<dbReference type="Gene3D" id="2.70.40.10">
    <property type="match status" value="1"/>
</dbReference>
<dbReference type="HAMAP" id="MF_00146">
    <property type="entry name" value="dCTP_deaminase"/>
    <property type="match status" value="1"/>
</dbReference>
<dbReference type="InterPro" id="IPR011962">
    <property type="entry name" value="dCTP_deaminase"/>
</dbReference>
<dbReference type="InterPro" id="IPR036157">
    <property type="entry name" value="dUTPase-like_sf"/>
</dbReference>
<dbReference type="InterPro" id="IPR033704">
    <property type="entry name" value="dUTPase_trimeric"/>
</dbReference>
<dbReference type="NCBIfam" id="TIGR02274">
    <property type="entry name" value="dCTP_deam"/>
    <property type="match status" value="1"/>
</dbReference>
<dbReference type="PANTHER" id="PTHR42680">
    <property type="entry name" value="DCTP DEAMINASE"/>
    <property type="match status" value="1"/>
</dbReference>
<dbReference type="PANTHER" id="PTHR42680:SF3">
    <property type="entry name" value="DCTP DEAMINASE"/>
    <property type="match status" value="1"/>
</dbReference>
<dbReference type="Pfam" id="PF22769">
    <property type="entry name" value="DCD"/>
    <property type="match status" value="1"/>
</dbReference>
<dbReference type="SUPFAM" id="SSF51283">
    <property type="entry name" value="dUTPase-like"/>
    <property type="match status" value="1"/>
</dbReference>
<keyword id="KW-0378">Hydrolase</keyword>
<keyword id="KW-0546">Nucleotide metabolism</keyword>
<keyword id="KW-0547">Nucleotide-binding</keyword>
<keyword id="KW-1185">Reference proteome</keyword>
<feature type="chain" id="PRO_1000117982" description="dCTP deaminase, dUMP-forming">
    <location>
        <begin position="1"/>
        <end position="185"/>
    </location>
</feature>
<feature type="active site" description="Proton donor/acceptor" evidence="1">
    <location>
        <position position="127"/>
    </location>
</feature>
<feature type="binding site" evidence="1">
    <location>
        <begin position="99"/>
        <end position="104"/>
    </location>
    <ligand>
        <name>dCTP</name>
        <dbReference type="ChEBI" id="CHEBI:61481"/>
    </ligand>
</feature>
<feature type="binding site" evidence="1">
    <location>
        <position position="117"/>
    </location>
    <ligand>
        <name>dCTP</name>
        <dbReference type="ChEBI" id="CHEBI:61481"/>
    </ligand>
</feature>
<feature type="binding site" evidence="1">
    <location>
        <begin position="125"/>
        <end position="127"/>
    </location>
    <ligand>
        <name>dCTP</name>
        <dbReference type="ChEBI" id="CHEBI:61481"/>
    </ligand>
</feature>
<feature type="binding site" evidence="1">
    <location>
        <position position="146"/>
    </location>
    <ligand>
        <name>dCTP</name>
        <dbReference type="ChEBI" id="CHEBI:61481"/>
    </ligand>
</feature>
<feature type="binding site" evidence="1">
    <location>
        <position position="159"/>
    </location>
    <ligand>
        <name>dCTP</name>
        <dbReference type="ChEBI" id="CHEBI:61481"/>
    </ligand>
</feature>
<feature type="binding site" evidence="1">
    <location>
        <position position="166"/>
    </location>
    <ligand>
        <name>dCTP</name>
        <dbReference type="ChEBI" id="CHEBI:61481"/>
    </ligand>
</feature>
<feature type="binding site" evidence="1">
    <location>
        <position position="170"/>
    </location>
    <ligand>
        <name>dCTP</name>
        <dbReference type="ChEBI" id="CHEBI:61481"/>
    </ligand>
</feature>
<feature type="site" description="Important for bifunctional activity" evidence="1">
    <location>
        <begin position="114"/>
        <end position="115"/>
    </location>
</feature>
<sequence>MILVDWQITDRIERGYIGIDPYNPELIQPNSIDIRLGNHFVWYTPGDEIIDPYIRDTVTGGTEEMTAESIVLHPGQFVLAETMEAIRLPDNIVASIEGKSSIARLGIELHQTGGWIDAGFAGSITLEMCNVNQRPVRMHAGMPIGQLVFYTTERALCPYNAKKDAKYLNQRQATLSRYYENKKRA</sequence>
<reference key="1">
    <citation type="journal article" date="2016" name="Stand. Genomic Sci.">
        <title>Complete genome sequence of Methanospirillum hungatei type strain JF1.</title>
        <authorList>
            <person name="Gunsalus R.P."/>
            <person name="Cook L.E."/>
            <person name="Crable B."/>
            <person name="Rohlin L."/>
            <person name="McDonald E."/>
            <person name="Mouttaki H."/>
            <person name="Sieber J.R."/>
            <person name="Poweleit N."/>
            <person name="Zhou H."/>
            <person name="Lapidus A.L."/>
            <person name="Daligault H.E."/>
            <person name="Land M."/>
            <person name="Gilna P."/>
            <person name="Ivanova N."/>
            <person name="Kyrpides N."/>
            <person name="Culley D.E."/>
            <person name="McInerney M.J."/>
        </authorList>
    </citation>
    <scope>NUCLEOTIDE SEQUENCE [LARGE SCALE GENOMIC DNA]</scope>
    <source>
        <strain>ATCC 27890 / DSM 864 / NBRC 100397 / JF-1</strain>
    </source>
</reference>
<accession>Q2FQM7</accession>
<evidence type="ECO:0000255" key="1">
    <source>
        <dbReference type="HAMAP-Rule" id="MF_00146"/>
    </source>
</evidence>
<proteinExistence type="inferred from homology"/>
<gene>
    <name evidence="1" type="primary">dcd</name>
    <name type="ordered locus">Mhun_1008</name>
</gene>
<name>DCDB_METHJ</name>